<comment type="function">
    <text evidence="1">Na(+)/H(+) antiporter that extrudes sodium in exchange for external protons.</text>
</comment>
<comment type="catalytic activity">
    <reaction evidence="1">
        <text>Na(+)(in) + 2 H(+)(out) = Na(+)(out) + 2 H(+)(in)</text>
        <dbReference type="Rhea" id="RHEA:29251"/>
        <dbReference type="ChEBI" id="CHEBI:15378"/>
        <dbReference type="ChEBI" id="CHEBI:29101"/>
    </reaction>
    <physiologicalReaction direction="left-to-right" evidence="1">
        <dbReference type="Rhea" id="RHEA:29252"/>
    </physiologicalReaction>
</comment>
<comment type="subcellular location">
    <subcellularLocation>
        <location evidence="1">Cell inner membrane</location>
        <topology evidence="1">Multi-pass membrane protein</topology>
    </subcellularLocation>
</comment>
<comment type="similarity">
    <text evidence="1">Belongs to the NhaA Na(+)/H(+) (TC 2.A.33) antiporter family.</text>
</comment>
<organism>
    <name type="scientific">Shewanella loihica (strain ATCC BAA-1088 / PV-4)</name>
    <dbReference type="NCBI Taxonomy" id="323850"/>
    <lineage>
        <taxon>Bacteria</taxon>
        <taxon>Pseudomonadati</taxon>
        <taxon>Pseudomonadota</taxon>
        <taxon>Gammaproteobacteria</taxon>
        <taxon>Alteromonadales</taxon>
        <taxon>Shewanellaceae</taxon>
        <taxon>Shewanella</taxon>
    </lineage>
</organism>
<proteinExistence type="inferred from homology"/>
<feature type="chain" id="PRO_0000334426" description="Na(+)/H(+) antiporter NhaA">
    <location>
        <begin position="1"/>
        <end position="391"/>
    </location>
</feature>
<feature type="transmembrane region" description="Helical" evidence="1">
    <location>
        <begin position="14"/>
        <end position="34"/>
    </location>
</feature>
<feature type="transmembrane region" description="Helical" evidence="1">
    <location>
        <begin position="59"/>
        <end position="79"/>
    </location>
</feature>
<feature type="transmembrane region" description="Helical" evidence="1">
    <location>
        <begin position="95"/>
        <end position="115"/>
    </location>
</feature>
<feature type="transmembrane region" description="Helical" evidence="1">
    <location>
        <begin position="124"/>
        <end position="144"/>
    </location>
</feature>
<feature type="transmembrane region" description="Helical" evidence="1">
    <location>
        <begin position="154"/>
        <end position="174"/>
    </location>
</feature>
<feature type="transmembrane region" description="Helical" evidence="1">
    <location>
        <begin position="177"/>
        <end position="197"/>
    </location>
</feature>
<feature type="transmembrane region" description="Helical" evidence="1">
    <location>
        <begin position="213"/>
        <end position="233"/>
    </location>
</feature>
<feature type="transmembrane region" description="Helical" evidence="1">
    <location>
        <begin position="261"/>
        <end position="281"/>
    </location>
</feature>
<feature type="transmembrane region" description="Helical" evidence="1">
    <location>
        <begin position="292"/>
        <end position="312"/>
    </location>
</feature>
<feature type="transmembrane region" description="Helical" evidence="1">
    <location>
        <begin position="331"/>
        <end position="351"/>
    </location>
</feature>
<feature type="transmembrane region" description="Helical" evidence="1">
    <location>
        <begin position="363"/>
        <end position="383"/>
    </location>
</feature>
<evidence type="ECO:0000255" key="1">
    <source>
        <dbReference type="HAMAP-Rule" id="MF_01844"/>
    </source>
</evidence>
<sequence length="391" mass="41245">MEKAIRNFLSQESAGGILLMAAVILAMIMANSPLSGLYQGFLHTEMQVRVGSLDIDKTLIHWINDGLMALFFMLIGLEVKRELLEGALSSREQASLPTFAAIGGMIFPAAIYLIFNYADPITQVGWAIPAATDIAFALGIMALLGSRVPVALKVFLLALAIIDDLGVVVIIAMFYSTDLSAISLVVAALAIVILVGLNRKGVTALAPYGVVGLILWIAVLKSGVHATLAGVIIAFCIPLRAKDGSSPSEHLEHSLHPWSTFVILPIFAFANAGVDLSGMSLGDLLSPVPVGIALGLLLGKPLGVLLFSFVAVKLKLAALPEGMGWRHIAPVAVMCGIGFTMSMFISSLAFIGDGEAYGDLARLGILTGSIMSAVIGYFWLSKVLPEKGEKS</sequence>
<gene>
    <name evidence="1" type="primary">nhaA</name>
    <name type="ordered locus">Shew_1042</name>
</gene>
<accession>A3QBR5</accession>
<keyword id="KW-0050">Antiport</keyword>
<keyword id="KW-0997">Cell inner membrane</keyword>
<keyword id="KW-1003">Cell membrane</keyword>
<keyword id="KW-0406">Ion transport</keyword>
<keyword id="KW-0472">Membrane</keyword>
<keyword id="KW-1185">Reference proteome</keyword>
<keyword id="KW-0915">Sodium</keyword>
<keyword id="KW-0739">Sodium transport</keyword>
<keyword id="KW-0812">Transmembrane</keyword>
<keyword id="KW-1133">Transmembrane helix</keyword>
<keyword id="KW-0813">Transport</keyword>
<dbReference type="EMBL" id="CP000606">
    <property type="protein sequence ID" value="ABO22913.1"/>
    <property type="molecule type" value="Genomic_DNA"/>
</dbReference>
<dbReference type="RefSeq" id="WP_011864846.1">
    <property type="nucleotide sequence ID" value="NC_009092.1"/>
</dbReference>
<dbReference type="SMR" id="A3QBR5"/>
<dbReference type="STRING" id="323850.Shew_1042"/>
<dbReference type="KEGG" id="slo:Shew_1042"/>
<dbReference type="eggNOG" id="COG3004">
    <property type="taxonomic scope" value="Bacteria"/>
</dbReference>
<dbReference type="HOGENOM" id="CLU_015803_1_0_6"/>
<dbReference type="OrthoDB" id="9808135at2"/>
<dbReference type="Proteomes" id="UP000001558">
    <property type="component" value="Chromosome"/>
</dbReference>
<dbReference type="GO" id="GO:0005886">
    <property type="term" value="C:plasma membrane"/>
    <property type="evidence" value="ECO:0007669"/>
    <property type="project" value="UniProtKB-SubCell"/>
</dbReference>
<dbReference type="GO" id="GO:0015385">
    <property type="term" value="F:sodium:proton antiporter activity"/>
    <property type="evidence" value="ECO:0007669"/>
    <property type="project" value="TreeGrafter"/>
</dbReference>
<dbReference type="GO" id="GO:0006885">
    <property type="term" value="P:regulation of pH"/>
    <property type="evidence" value="ECO:0007669"/>
    <property type="project" value="InterPro"/>
</dbReference>
<dbReference type="Gene3D" id="1.20.1530.10">
    <property type="entry name" value="Na+/H+ antiporter like domain"/>
    <property type="match status" value="1"/>
</dbReference>
<dbReference type="HAMAP" id="MF_01844">
    <property type="entry name" value="NhaA"/>
    <property type="match status" value="1"/>
</dbReference>
<dbReference type="InterPro" id="IPR023171">
    <property type="entry name" value="Na/H_antiporter_dom_sf"/>
</dbReference>
<dbReference type="InterPro" id="IPR004670">
    <property type="entry name" value="NhaA"/>
</dbReference>
<dbReference type="NCBIfam" id="TIGR00773">
    <property type="entry name" value="NhaA"/>
    <property type="match status" value="1"/>
</dbReference>
<dbReference type="NCBIfam" id="NF007111">
    <property type="entry name" value="PRK09560.1"/>
    <property type="match status" value="1"/>
</dbReference>
<dbReference type="NCBIfam" id="NF007112">
    <property type="entry name" value="PRK09561.1"/>
    <property type="match status" value="1"/>
</dbReference>
<dbReference type="PANTHER" id="PTHR30341:SF0">
    <property type="entry name" value="NA(+)_H(+) ANTIPORTER NHAA"/>
    <property type="match status" value="1"/>
</dbReference>
<dbReference type="PANTHER" id="PTHR30341">
    <property type="entry name" value="SODIUM ION/PROTON ANTIPORTER NHAA-RELATED"/>
    <property type="match status" value="1"/>
</dbReference>
<dbReference type="Pfam" id="PF06965">
    <property type="entry name" value="Na_H_antiport_1"/>
    <property type="match status" value="1"/>
</dbReference>
<reference key="1">
    <citation type="submission" date="2007-03" db="EMBL/GenBank/DDBJ databases">
        <title>Complete sequence of Shewanella loihica PV-4.</title>
        <authorList>
            <consortium name="US DOE Joint Genome Institute"/>
            <person name="Copeland A."/>
            <person name="Lucas S."/>
            <person name="Lapidus A."/>
            <person name="Barry K."/>
            <person name="Detter J.C."/>
            <person name="Glavina del Rio T."/>
            <person name="Hammon N."/>
            <person name="Israni S."/>
            <person name="Dalin E."/>
            <person name="Tice H."/>
            <person name="Pitluck S."/>
            <person name="Chain P."/>
            <person name="Malfatti S."/>
            <person name="Shin M."/>
            <person name="Vergez L."/>
            <person name="Schmutz J."/>
            <person name="Larimer F."/>
            <person name="Land M."/>
            <person name="Hauser L."/>
            <person name="Kyrpides N."/>
            <person name="Mikhailova N."/>
            <person name="Romine M.F."/>
            <person name="Serres G."/>
            <person name="Fredrickson J."/>
            <person name="Tiedje J."/>
            <person name="Richardson P."/>
        </authorList>
    </citation>
    <scope>NUCLEOTIDE SEQUENCE [LARGE SCALE GENOMIC DNA]</scope>
    <source>
        <strain>ATCC BAA-1088 / PV-4</strain>
    </source>
</reference>
<protein>
    <recommendedName>
        <fullName evidence="1">Na(+)/H(+) antiporter NhaA</fullName>
    </recommendedName>
    <alternativeName>
        <fullName evidence="1">Sodium/proton antiporter NhaA</fullName>
    </alternativeName>
</protein>
<name>NHAA_SHELP</name>